<gene>
    <name evidence="1" type="primary">uvrB</name>
    <name type="ordered locus">STER_1457</name>
</gene>
<comment type="function">
    <text evidence="1">The UvrABC repair system catalyzes the recognition and processing of DNA lesions. A damage recognition complex composed of 2 UvrA and 2 UvrB subunits scans DNA for abnormalities. Upon binding of the UvrA(2)B(2) complex to a putative damaged site, the DNA wraps around one UvrB monomer. DNA wrap is dependent on ATP binding by UvrB and probably causes local melting of the DNA helix, facilitating insertion of UvrB beta-hairpin between the DNA strands. Then UvrB probes one DNA strand for the presence of a lesion. If a lesion is found the UvrA subunits dissociate and the UvrB-DNA preincision complex is formed. This complex is subsequently bound by UvrC and the second UvrB is released. If no lesion is found, the DNA wraps around the other UvrB subunit that will check the other stand for damage.</text>
</comment>
<comment type="subunit">
    <text evidence="1">Forms a heterotetramer with UvrA during the search for lesions. Interacts with UvrC in an incision complex.</text>
</comment>
<comment type="subcellular location">
    <subcellularLocation>
        <location evidence="1">Cytoplasm</location>
    </subcellularLocation>
</comment>
<comment type="domain">
    <text evidence="1">The beta-hairpin motif is involved in DNA binding.</text>
</comment>
<comment type="similarity">
    <text evidence="1">Belongs to the UvrB family.</text>
</comment>
<evidence type="ECO:0000255" key="1">
    <source>
        <dbReference type="HAMAP-Rule" id="MF_00204"/>
    </source>
</evidence>
<keyword id="KW-0067">ATP-binding</keyword>
<keyword id="KW-0963">Cytoplasm</keyword>
<keyword id="KW-0227">DNA damage</keyword>
<keyword id="KW-0228">DNA excision</keyword>
<keyword id="KW-0234">DNA repair</keyword>
<keyword id="KW-0267">Excision nuclease</keyword>
<keyword id="KW-0347">Helicase</keyword>
<keyword id="KW-0378">Hydrolase</keyword>
<keyword id="KW-0547">Nucleotide-binding</keyword>
<keyword id="KW-0742">SOS response</keyword>
<proteinExistence type="inferred from homology"/>
<dbReference type="EMBL" id="CP000419">
    <property type="protein sequence ID" value="ABJ66618.1"/>
    <property type="molecule type" value="Genomic_DNA"/>
</dbReference>
<dbReference type="SMR" id="Q03JK4"/>
<dbReference type="KEGG" id="ste:STER_1457"/>
<dbReference type="HOGENOM" id="CLU_009621_2_1_9"/>
<dbReference type="GO" id="GO:0005737">
    <property type="term" value="C:cytoplasm"/>
    <property type="evidence" value="ECO:0007669"/>
    <property type="project" value="UniProtKB-SubCell"/>
</dbReference>
<dbReference type="GO" id="GO:0009380">
    <property type="term" value="C:excinuclease repair complex"/>
    <property type="evidence" value="ECO:0007669"/>
    <property type="project" value="InterPro"/>
</dbReference>
<dbReference type="GO" id="GO:0005524">
    <property type="term" value="F:ATP binding"/>
    <property type="evidence" value="ECO:0007669"/>
    <property type="project" value="UniProtKB-UniRule"/>
</dbReference>
<dbReference type="GO" id="GO:0016887">
    <property type="term" value="F:ATP hydrolysis activity"/>
    <property type="evidence" value="ECO:0007669"/>
    <property type="project" value="InterPro"/>
</dbReference>
<dbReference type="GO" id="GO:0003677">
    <property type="term" value="F:DNA binding"/>
    <property type="evidence" value="ECO:0007669"/>
    <property type="project" value="UniProtKB-UniRule"/>
</dbReference>
<dbReference type="GO" id="GO:0009381">
    <property type="term" value="F:excinuclease ABC activity"/>
    <property type="evidence" value="ECO:0007669"/>
    <property type="project" value="UniProtKB-UniRule"/>
</dbReference>
<dbReference type="GO" id="GO:0004386">
    <property type="term" value="F:helicase activity"/>
    <property type="evidence" value="ECO:0007669"/>
    <property type="project" value="UniProtKB-KW"/>
</dbReference>
<dbReference type="GO" id="GO:0006289">
    <property type="term" value="P:nucleotide-excision repair"/>
    <property type="evidence" value="ECO:0007669"/>
    <property type="project" value="UniProtKB-UniRule"/>
</dbReference>
<dbReference type="GO" id="GO:0009432">
    <property type="term" value="P:SOS response"/>
    <property type="evidence" value="ECO:0007669"/>
    <property type="project" value="UniProtKB-UniRule"/>
</dbReference>
<dbReference type="CDD" id="cd17916">
    <property type="entry name" value="DEXHc_UvrB"/>
    <property type="match status" value="1"/>
</dbReference>
<dbReference type="CDD" id="cd18790">
    <property type="entry name" value="SF2_C_UvrB"/>
    <property type="match status" value="1"/>
</dbReference>
<dbReference type="Gene3D" id="3.40.50.300">
    <property type="entry name" value="P-loop containing nucleotide triphosphate hydrolases"/>
    <property type="match status" value="3"/>
</dbReference>
<dbReference type="Gene3D" id="4.10.860.10">
    <property type="entry name" value="UVR domain"/>
    <property type="match status" value="1"/>
</dbReference>
<dbReference type="HAMAP" id="MF_00204">
    <property type="entry name" value="UvrB"/>
    <property type="match status" value="1"/>
</dbReference>
<dbReference type="InterPro" id="IPR006935">
    <property type="entry name" value="Helicase/UvrB_N"/>
</dbReference>
<dbReference type="InterPro" id="IPR014001">
    <property type="entry name" value="Helicase_ATP-bd"/>
</dbReference>
<dbReference type="InterPro" id="IPR001650">
    <property type="entry name" value="Helicase_C-like"/>
</dbReference>
<dbReference type="InterPro" id="IPR027417">
    <property type="entry name" value="P-loop_NTPase"/>
</dbReference>
<dbReference type="InterPro" id="IPR001943">
    <property type="entry name" value="UVR_dom"/>
</dbReference>
<dbReference type="InterPro" id="IPR036876">
    <property type="entry name" value="UVR_dom_sf"/>
</dbReference>
<dbReference type="InterPro" id="IPR004807">
    <property type="entry name" value="UvrB"/>
</dbReference>
<dbReference type="InterPro" id="IPR041471">
    <property type="entry name" value="UvrB_inter"/>
</dbReference>
<dbReference type="InterPro" id="IPR024759">
    <property type="entry name" value="UvrB_YAD/RRR_dom"/>
</dbReference>
<dbReference type="NCBIfam" id="NF003673">
    <property type="entry name" value="PRK05298.1"/>
    <property type="match status" value="1"/>
</dbReference>
<dbReference type="NCBIfam" id="TIGR00631">
    <property type="entry name" value="uvrb"/>
    <property type="match status" value="1"/>
</dbReference>
<dbReference type="PANTHER" id="PTHR24029">
    <property type="entry name" value="UVRABC SYSTEM PROTEIN B"/>
    <property type="match status" value="1"/>
</dbReference>
<dbReference type="PANTHER" id="PTHR24029:SF0">
    <property type="entry name" value="UVRABC SYSTEM PROTEIN B"/>
    <property type="match status" value="1"/>
</dbReference>
<dbReference type="Pfam" id="PF00271">
    <property type="entry name" value="Helicase_C"/>
    <property type="match status" value="1"/>
</dbReference>
<dbReference type="Pfam" id="PF04851">
    <property type="entry name" value="ResIII"/>
    <property type="match status" value="1"/>
</dbReference>
<dbReference type="Pfam" id="PF02151">
    <property type="entry name" value="UVR"/>
    <property type="match status" value="1"/>
</dbReference>
<dbReference type="Pfam" id="PF12344">
    <property type="entry name" value="UvrB"/>
    <property type="match status" value="1"/>
</dbReference>
<dbReference type="Pfam" id="PF17757">
    <property type="entry name" value="UvrB_inter"/>
    <property type="match status" value="1"/>
</dbReference>
<dbReference type="SMART" id="SM00487">
    <property type="entry name" value="DEXDc"/>
    <property type="match status" value="1"/>
</dbReference>
<dbReference type="SMART" id="SM00490">
    <property type="entry name" value="HELICc"/>
    <property type="match status" value="1"/>
</dbReference>
<dbReference type="SUPFAM" id="SSF46600">
    <property type="entry name" value="C-terminal UvrC-binding domain of UvrB"/>
    <property type="match status" value="1"/>
</dbReference>
<dbReference type="SUPFAM" id="SSF52540">
    <property type="entry name" value="P-loop containing nucleoside triphosphate hydrolases"/>
    <property type="match status" value="2"/>
</dbReference>
<dbReference type="PROSITE" id="PS51192">
    <property type="entry name" value="HELICASE_ATP_BIND_1"/>
    <property type="match status" value="1"/>
</dbReference>
<dbReference type="PROSITE" id="PS51194">
    <property type="entry name" value="HELICASE_CTER"/>
    <property type="match status" value="1"/>
</dbReference>
<dbReference type="PROSITE" id="PS50151">
    <property type="entry name" value="UVR"/>
    <property type="match status" value="1"/>
</dbReference>
<protein>
    <recommendedName>
        <fullName evidence="1">UvrABC system protein B</fullName>
        <shortName evidence="1">Protein UvrB</shortName>
    </recommendedName>
    <alternativeName>
        <fullName evidence="1">Excinuclease ABC subunit B</fullName>
    </alternativeName>
</protein>
<feature type="chain" id="PRO_1000077933" description="UvrABC system protein B">
    <location>
        <begin position="1"/>
        <end position="668"/>
    </location>
</feature>
<feature type="domain" description="Helicase ATP-binding" evidence="1">
    <location>
        <begin position="36"/>
        <end position="276"/>
    </location>
</feature>
<feature type="domain" description="Helicase C-terminal" evidence="1">
    <location>
        <begin position="440"/>
        <end position="606"/>
    </location>
</feature>
<feature type="domain" description="UVR" evidence="1">
    <location>
        <begin position="632"/>
        <end position="667"/>
    </location>
</feature>
<feature type="short sequence motif" description="Beta-hairpin">
    <location>
        <begin position="102"/>
        <end position="125"/>
    </location>
</feature>
<feature type="binding site" evidence="1">
    <location>
        <begin position="49"/>
        <end position="56"/>
    </location>
    <ligand>
        <name>ATP</name>
        <dbReference type="ChEBI" id="CHEBI:30616"/>
    </ligand>
</feature>
<sequence>MKGKTMIDRKEDNQFHLVSKYEPSGDQPQAIETLVDNIKGGEKAQILKGATGTGKTYTMSQVIQRVNKPTLVIAHNKTLAGQLYGEFKEFFPDNAVEYFVSYYDYYQPEAYVPSSDTYIEKDSSVNDEIDKLRHSATSALLERNDVIVVASVSCIYGLGSPKEYADSAVSLRPGQEISRDKLLNDLVDIQFERNDIDFQRGKFRVRGDVVEIFPASRDENAFRVEFFGDEIDRICEIESLTGRNLGEVEHLVLFPATHFMTNEEHMEEAIKNIMEEMEVQVNQFEAEGKLIEAQRIRQRTEYDVEMLREMGYTNGIENYSRHMDGRKEGEPPFTLLDFFPEDFLIMIDESHMTMGQIKGMYNGDQARKKMLVDYGFRLPSALDNRPLRREEFESHVHQIVYVSATPGDYEMEQTETVVEQIIRPTGLLDPEVEVRPTMGQMDDLLGEINARTEKGERVFVTTLTKKMAEDLTDYLKEMGVKVKYMHSDIKTLERTEIIRDLRLGVFDVLIGINLLREGIDVPEVSLVAILDADKEGFLRNERGLIQTIGRAARNSDGHVIMYADKITESMQKAMDETARRREIQMAYNKEHGITPQTIKKEIRDLISITKTNEAEVAEDTVNYSAMNKKERQEAIKKLQKQMHEAAELLDFELAAQIRDMVLELKSMD</sequence>
<organism>
    <name type="scientific">Streptococcus thermophilus (strain ATCC BAA-491 / LMD-9)</name>
    <dbReference type="NCBI Taxonomy" id="322159"/>
    <lineage>
        <taxon>Bacteria</taxon>
        <taxon>Bacillati</taxon>
        <taxon>Bacillota</taxon>
        <taxon>Bacilli</taxon>
        <taxon>Lactobacillales</taxon>
        <taxon>Streptococcaceae</taxon>
        <taxon>Streptococcus</taxon>
    </lineage>
</organism>
<name>UVRB_STRTD</name>
<accession>Q03JK4</accession>
<reference key="1">
    <citation type="journal article" date="2006" name="Proc. Natl. Acad. Sci. U.S.A.">
        <title>Comparative genomics of the lactic acid bacteria.</title>
        <authorList>
            <person name="Makarova K.S."/>
            <person name="Slesarev A."/>
            <person name="Wolf Y.I."/>
            <person name="Sorokin A."/>
            <person name="Mirkin B."/>
            <person name="Koonin E.V."/>
            <person name="Pavlov A."/>
            <person name="Pavlova N."/>
            <person name="Karamychev V."/>
            <person name="Polouchine N."/>
            <person name="Shakhova V."/>
            <person name="Grigoriev I."/>
            <person name="Lou Y."/>
            <person name="Rohksar D."/>
            <person name="Lucas S."/>
            <person name="Huang K."/>
            <person name="Goodstein D.M."/>
            <person name="Hawkins T."/>
            <person name="Plengvidhya V."/>
            <person name="Welker D."/>
            <person name="Hughes J."/>
            <person name="Goh Y."/>
            <person name="Benson A."/>
            <person name="Baldwin K."/>
            <person name="Lee J.-H."/>
            <person name="Diaz-Muniz I."/>
            <person name="Dosti B."/>
            <person name="Smeianov V."/>
            <person name="Wechter W."/>
            <person name="Barabote R."/>
            <person name="Lorca G."/>
            <person name="Altermann E."/>
            <person name="Barrangou R."/>
            <person name="Ganesan B."/>
            <person name="Xie Y."/>
            <person name="Rawsthorne H."/>
            <person name="Tamir D."/>
            <person name="Parker C."/>
            <person name="Breidt F."/>
            <person name="Broadbent J.R."/>
            <person name="Hutkins R."/>
            <person name="O'Sullivan D."/>
            <person name="Steele J."/>
            <person name="Unlu G."/>
            <person name="Saier M.H. Jr."/>
            <person name="Klaenhammer T."/>
            <person name="Richardson P."/>
            <person name="Kozyavkin S."/>
            <person name="Weimer B.C."/>
            <person name="Mills D.A."/>
        </authorList>
    </citation>
    <scope>NUCLEOTIDE SEQUENCE [LARGE SCALE GENOMIC DNA]</scope>
    <source>
        <strain>ATCC BAA-491 / LMD-9</strain>
    </source>
</reference>